<dbReference type="EC" id="3.6.5.3" evidence="2"/>
<dbReference type="EMBL" id="CP000142">
    <property type="protein sequence ID" value="ABA87945.1"/>
    <property type="molecule type" value="Genomic_DNA"/>
</dbReference>
<dbReference type="RefSeq" id="WP_011340388.1">
    <property type="nucleotide sequence ID" value="NC_007498.2"/>
</dbReference>
<dbReference type="SMR" id="Q3A6R2"/>
<dbReference type="STRING" id="338963.Pcar_0686"/>
<dbReference type="KEGG" id="pca:Pcar_0686"/>
<dbReference type="eggNOG" id="COG0050">
    <property type="taxonomic scope" value="Bacteria"/>
</dbReference>
<dbReference type="HOGENOM" id="CLU_007265_0_0_7"/>
<dbReference type="OrthoDB" id="9803139at2"/>
<dbReference type="Proteomes" id="UP000002534">
    <property type="component" value="Chromosome"/>
</dbReference>
<dbReference type="GO" id="GO:0005829">
    <property type="term" value="C:cytosol"/>
    <property type="evidence" value="ECO:0007669"/>
    <property type="project" value="TreeGrafter"/>
</dbReference>
<dbReference type="GO" id="GO:0005525">
    <property type="term" value="F:GTP binding"/>
    <property type="evidence" value="ECO:0007669"/>
    <property type="project" value="UniProtKB-UniRule"/>
</dbReference>
<dbReference type="GO" id="GO:0003924">
    <property type="term" value="F:GTPase activity"/>
    <property type="evidence" value="ECO:0007669"/>
    <property type="project" value="InterPro"/>
</dbReference>
<dbReference type="GO" id="GO:0003746">
    <property type="term" value="F:translation elongation factor activity"/>
    <property type="evidence" value="ECO:0007669"/>
    <property type="project" value="UniProtKB-UniRule"/>
</dbReference>
<dbReference type="CDD" id="cd01884">
    <property type="entry name" value="EF_Tu"/>
    <property type="match status" value="1"/>
</dbReference>
<dbReference type="CDD" id="cd03697">
    <property type="entry name" value="EFTU_II"/>
    <property type="match status" value="1"/>
</dbReference>
<dbReference type="CDD" id="cd03707">
    <property type="entry name" value="EFTU_III"/>
    <property type="match status" value="1"/>
</dbReference>
<dbReference type="FunFam" id="2.40.30.10:FF:000001">
    <property type="entry name" value="Elongation factor Tu"/>
    <property type="match status" value="1"/>
</dbReference>
<dbReference type="FunFam" id="3.40.50.300:FF:000003">
    <property type="entry name" value="Elongation factor Tu"/>
    <property type="match status" value="1"/>
</dbReference>
<dbReference type="Gene3D" id="3.40.50.300">
    <property type="entry name" value="P-loop containing nucleotide triphosphate hydrolases"/>
    <property type="match status" value="1"/>
</dbReference>
<dbReference type="Gene3D" id="2.40.30.10">
    <property type="entry name" value="Translation factors"/>
    <property type="match status" value="2"/>
</dbReference>
<dbReference type="HAMAP" id="MF_00118_B">
    <property type="entry name" value="EF_Tu_B"/>
    <property type="match status" value="1"/>
</dbReference>
<dbReference type="InterPro" id="IPR041709">
    <property type="entry name" value="EF-Tu_GTP-bd"/>
</dbReference>
<dbReference type="InterPro" id="IPR050055">
    <property type="entry name" value="EF-Tu_GTPase"/>
</dbReference>
<dbReference type="InterPro" id="IPR004161">
    <property type="entry name" value="EFTu-like_2"/>
</dbReference>
<dbReference type="InterPro" id="IPR033720">
    <property type="entry name" value="EFTU_2"/>
</dbReference>
<dbReference type="InterPro" id="IPR031157">
    <property type="entry name" value="G_TR_CS"/>
</dbReference>
<dbReference type="InterPro" id="IPR027417">
    <property type="entry name" value="P-loop_NTPase"/>
</dbReference>
<dbReference type="InterPro" id="IPR005225">
    <property type="entry name" value="Small_GTP-bd"/>
</dbReference>
<dbReference type="InterPro" id="IPR000795">
    <property type="entry name" value="T_Tr_GTP-bd_dom"/>
</dbReference>
<dbReference type="InterPro" id="IPR009000">
    <property type="entry name" value="Transl_B-barrel_sf"/>
</dbReference>
<dbReference type="InterPro" id="IPR009001">
    <property type="entry name" value="Transl_elong_EF1A/Init_IF2_C"/>
</dbReference>
<dbReference type="InterPro" id="IPR004541">
    <property type="entry name" value="Transl_elong_EFTu/EF1A_bac/org"/>
</dbReference>
<dbReference type="InterPro" id="IPR004160">
    <property type="entry name" value="Transl_elong_EFTu/EF1A_C"/>
</dbReference>
<dbReference type="NCBIfam" id="TIGR00485">
    <property type="entry name" value="EF-Tu"/>
    <property type="match status" value="1"/>
</dbReference>
<dbReference type="NCBIfam" id="NF000766">
    <property type="entry name" value="PRK00049.1"/>
    <property type="match status" value="1"/>
</dbReference>
<dbReference type="NCBIfam" id="NF009372">
    <property type="entry name" value="PRK12735.1"/>
    <property type="match status" value="1"/>
</dbReference>
<dbReference type="NCBIfam" id="NF009373">
    <property type="entry name" value="PRK12736.1"/>
    <property type="match status" value="1"/>
</dbReference>
<dbReference type="NCBIfam" id="TIGR00231">
    <property type="entry name" value="small_GTP"/>
    <property type="match status" value="1"/>
</dbReference>
<dbReference type="PANTHER" id="PTHR43721:SF22">
    <property type="entry name" value="ELONGATION FACTOR TU, MITOCHONDRIAL"/>
    <property type="match status" value="1"/>
</dbReference>
<dbReference type="PANTHER" id="PTHR43721">
    <property type="entry name" value="ELONGATION FACTOR TU-RELATED"/>
    <property type="match status" value="1"/>
</dbReference>
<dbReference type="Pfam" id="PF00009">
    <property type="entry name" value="GTP_EFTU"/>
    <property type="match status" value="1"/>
</dbReference>
<dbReference type="Pfam" id="PF03144">
    <property type="entry name" value="GTP_EFTU_D2"/>
    <property type="match status" value="1"/>
</dbReference>
<dbReference type="Pfam" id="PF03143">
    <property type="entry name" value="GTP_EFTU_D3"/>
    <property type="match status" value="1"/>
</dbReference>
<dbReference type="PRINTS" id="PR00315">
    <property type="entry name" value="ELONGATNFCT"/>
</dbReference>
<dbReference type="SUPFAM" id="SSF50465">
    <property type="entry name" value="EF-Tu/eEF-1alpha/eIF2-gamma C-terminal domain"/>
    <property type="match status" value="1"/>
</dbReference>
<dbReference type="SUPFAM" id="SSF52540">
    <property type="entry name" value="P-loop containing nucleoside triphosphate hydrolases"/>
    <property type="match status" value="1"/>
</dbReference>
<dbReference type="SUPFAM" id="SSF50447">
    <property type="entry name" value="Translation proteins"/>
    <property type="match status" value="1"/>
</dbReference>
<dbReference type="PROSITE" id="PS00301">
    <property type="entry name" value="G_TR_1"/>
    <property type="match status" value="1"/>
</dbReference>
<dbReference type="PROSITE" id="PS51722">
    <property type="entry name" value="G_TR_2"/>
    <property type="match status" value="1"/>
</dbReference>
<protein>
    <recommendedName>
        <fullName evidence="2">Elongation factor Tu 1</fullName>
        <shortName evidence="2">EF-Tu 1</shortName>
        <ecNumber evidence="2">3.6.5.3</ecNumber>
    </recommendedName>
</protein>
<evidence type="ECO:0000250" key="1"/>
<evidence type="ECO:0000255" key="2">
    <source>
        <dbReference type="HAMAP-Rule" id="MF_00118"/>
    </source>
</evidence>
<organism>
    <name type="scientific">Syntrophotalea carbinolica (strain DSM 2380 / NBRC 103641 / GraBd1)</name>
    <name type="common">Pelobacter carbinolicus</name>
    <dbReference type="NCBI Taxonomy" id="338963"/>
    <lineage>
        <taxon>Bacteria</taxon>
        <taxon>Pseudomonadati</taxon>
        <taxon>Thermodesulfobacteriota</taxon>
        <taxon>Desulfuromonadia</taxon>
        <taxon>Desulfuromonadales</taxon>
        <taxon>Syntrophotaleaceae</taxon>
        <taxon>Syntrophotalea</taxon>
    </lineage>
</organism>
<accession>Q3A6R2</accession>
<feature type="chain" id="PRO_0000337455" description="Elongation factor Tu 1">
    <location>
        <begin position="1"/>
        <end position="399"/>
    </location>
</feature>
<feature type="domain" description="tr-type G">
    <location>
        <begin position="10"/>
        <end position="209"/>
    </location>
</feature>
<feature type="region of interest" description="G1" evidence="1">
    <location>
        <begin position="19"/>
        <end position="26"/>
    </location>
</feature>
<feature type="region of interest" description="G2" evidence="1">
    <location>
        <begin position="60"/>
        <end position="64"/>
    </location>
</feature>
<feature type="region of interest" description="G3" evidence="1">
    <location>
        <begin position="81"/>
        <end position="84"/>
    </location>
</feature>
<feature type="region of interest" description="G4" evidence="1">
    <location>
        <begin position="136"/>
        <end position="139"/>
    </location>
</feature>
<feature type="region of interest" description="G5" evidence="1">
    <location>
        <begin position="174"/>
        <end position="176"/>
    </location>
</feature>
<feature type="binding site" evidence="2">
    <location>
        <begin position="19"/>
        <end position="26"/>
    </location>
    <ligand>
        <name>GTP</name>
        <dbReference type="ChEBI" id="CHEBI:37565"/>
    </ligand>
</feature>
<feature type="binding site" evidence="2">
    <location>
        <position position="26"/>
    </location>
    <ligand>
        <name>Mg(2+)</name>
        <dbReference type="ChEBI" id="CHEBI:18420"/>
    </ligand>
</feature>
<feature type="binding site" evidence="2">
    <location>
        <begin position="81"/>
        <end position="85"/>
    </location>
    <ligand>
        <name>GTP</name>
        <dbReference type="ChEBI" id="CHEBI:37565"/>
    </ligand>
</feature>
<feature type="binding site" evidence="2">
    <location>
        <begin position="136"/>
        <end position="139"/>
    </location>
    <ligand>
        <name>GTP</name>
        <dbReference type="ChEBI" id="CHEBI:37565"/>
    </ligand>
</feature>
<sequence>MSKAKFERTKPHVNIGTIGHVDHGKTTLTAAITQTMAARGLAEFKAFDQIDNAPEERERGITIATAHVEYQTDTRHYAHVDCPGHADYVKNMITGAAQMDGAILVVSAADGPMPQTREHILLARQVGVPAMVVFLNKADMVDDEELMELVELEVRELLSSYDFPGDDIPIVAGSALKALECGCGKDDCDACKPIIELMNQVDTYIPEPERDIDKPFLMPVEDVFSISGRGTVATGRVESGIVCVQDEIEIVGMKETTKTVVTGVEMFRKLLDQGQAGDNIGVLLRGVKREDIERGQVLAKPGSITPHTKFKAEAYILTKEEGGRHTPFFNGYRPQFYFRTTDVTGICELAEGTEMVMPGDNASMTVNLITPIAMDKELRFAIREGGRTVGAGVVSEVIE</sequence>
<reference key="1">
    <citation type="submission" date="2005-10" db="EMBL/GenBank/DDBJ databases">
        <title>Complete sequence of Pelobacter carbinolicus DSM 2380.</title>
        <authorList>
            <person name="Copeland A."/>
            <person name="Lucas S."/>
            <person name="Lapidus A."/>
            <person name="Barry K."/>
            <person name="Detter J.C."/>
            <person name="Glavina T."/>
            <person name="Hammon N."/>
            <person name="Israni S."/>
            <person name="Pitluck S."/>
            <person name="Chertkov O."/>
            <person name="Schmutz J."/>
            <person name="Larimer F."/>
            <person name="Land M."/>
            <person name="Kyrpides N."/>
            <person name="Ivanova N."/>
            <person name="Richardson P."/>
        </authorList>
    </citation>
    <scope>NUCLEOTIDE SEQUENCE [LARGE SCALE GENOMIC DNA]</scope>
    <source>
        <strain>DSM 2380 / NBRC 103641 / GraBd1</strain>
    </source>
</reference>
<proteinExistence type="inferred from homology"/>
<comment type="function">
    <text evidence="2">GTP hydrolase that promotes the GTP-dependent binding of aminoacyl-tRNA to the A-site of ribosomes during protein biosynthesis.</text>
</comment>
<comment type="catalytic activity">
    <reaction evidence="2">
        <text>GTP + H2O = GDP + phosphate + H(+)</text>
        <dbReference type="Rhea" id="RHEA:19669"/>
        <dbReference type="ChEBI" id="CHEBI:15377"/>
        <dbReference type="ChEBI" id="CHEBI:15378"/>
        <dbReference type="ChEBI" id="CHEBI:37565"/>
        <dbReference type="ChEBI" id="CHEBI:43474"/>
        <dbReference type="ChEBI" id="CHEBI:58189"/>
        <dbReference type="EC" id="3.6.5.3"/>
    </reaction>
    <physiologicalReaction direction="left-to-right" evidence="2">
        <dbReference type="Rhea" id="RHEA:19670"/>
    </physiologicalReaction>
</comment>
<comment type="subunit">
    <text evidence="2">Monomer.</text>
</comment>
<comment type="subcellular location">
    <subcellularLocation>
        <location evidence="2">Cytoplasm</location>
    </subcellularLocation>
</comment>
<comment type="similarity">
    <text evidence="2">Belongs to the TRAFAC class translation factor GTPase superfamily. Classic translation factor GTPase family. EF-Tu/EF-1A subfamily.</text>
</comment>
<keyword id="KW-0963">Cytoplasm</keyword>
<keyword id="KW-0251">Elongation factor</keyword>
<keyword id="KW-0342">GTP-binding</keyword>
<keyword id="KW-0378">Hydrolase</keyword>
<keyword id="KW-0460">Magnesium</keyword>
<keyword id="KW-0479">Metal-binding</keyword>
<keyword id="KW-0547">Nucleotide-binding</keyword>
<keyword id="KW-0648">Protein biosynthesis</keyword>
<keyword id="KW-1185">Reference proteome</keyword>
<name>EFTU1_SYNC1</name>
<gene>
    <name evidence="2" type="primary">tuf1</name>
    <name type="synonym">tufB</name>
    <name type="ordered locus">Pcar_0686</name>
</gene>